<gene>
    <name evidence="1" type="primary">cofE</name>
    <name type="ordered locus">VNG_2586C</name>
</gene>
<sequence length="253" mass="26441">MHAFAVDGLPEIDAGDDLAALVAERADLTDGDVVCVASTVVSKAEGRTAALAEFTPGPRAEEIAARLADVTGEQKDPRFAQAVIEEATEVIMDAPFLLTETTCGHVGVNAGIDRSNTGGAELLLLPKRPAESAARIQAGLAADVGVVVTDTSGRPFRHGQRGVALGWAGLPAARDWRGETDRDGHELAVTVEAVVDELAATANLVSGEGDDGTPVVVVREFEFGDHDGSEQLFRAVDGDFVRQALRGWTFDGA</sequence>
<accession>Q9HME1</accession>
<comment type="function">
    <text evidence="1">Catalyzes the GTP-dependent successive addition of two or more gamma-linked L-glutamates to the L-lactyl phosphodiester of 7,8-didemethyl-8-hydroxy-5-deazariboflavin (F420-0) to form coenzyme F420-0-glutamyl-glutamate (F420-2) or polyglutamated F420 derivatives.</text>
</comment>
<comment type="catalytic activity">
    <reaction evidence="1">
        <text>oxidized coenzyme F420-0 + GTP + L-glutamate = oxidized coenzyme F420-1 + GDP + phosphate + H(+)</text>
        <dbReference type="Rhea" id="RHEA:30555"/>
        <dbReference type="ChEBI" id="CHEBI:15378"/>
        <dbReference type="ChEBI" id="CHEBI:29985"/>
        <dbReference type="ChEBI" id="CHEBI:37565"/>
        <dbReference type="ChEBI" id="CHEBI:43474"/>
        <dbReference type="ChEBI" id="CHEBI:58189"/>
        <dbReference type="ChEBI" id="CHEBI:59907"/>
        <dbReference type="ChEBI" id="CHEBI:59920"/>
        <dbReference type="EC" id="6.3.2.31"/>
    </reaction>
</comment>
<comment type="catalytic activity">
    <reaction evidence="1">
        <text>oxidized coenzyme F420-1 + GTP + L-glutamate = oxidized coenzyme F420-2 + GDP + phosphate + H(+)</text>
        <dbReference type="Rhea" id="RHEA:30523"/>
        <dbReference type="ChEBI" id="CHEBI:15378"/>
        <dbReference type="ChEBI" id="CHEBI:29985"/>
        <dbReference type="ChEBI" id="CHEBI:37565"/>
        <dbReference type="ChEBI" id="CHEBI:43474"/>
        <dbReference type="ChEBI" id="CHEBI:57922"/>
        <dbReference type="ChEBI" id="CHEBI:58189"/>
        <dbReference type="ChEBI" id="CHEBI:59920"/>
        <dbReference type="EC" id="6.3.2.34"/>
    </reaction>
</comment>
<comment type="cofactor">
    <cofactor evidence="1">
        <name>Mg(2+)</name>
        <dbReference type="ChEBI" id="CHEBI:18420"/>
    </cofactor>
    <cofactor evidence="1">
        <name>Mn(2+)</name>
        <dbReference type="ChEBI" id="CHEBI:29035"/>
    </cofactor>
    <text evidence="1">Binds 2 divalent metal cations per subunit. The ions could be magnesium and/or manganese.</text>
</comment>
<comment type="cofactor">
    <cofactor evidence="1">
        <name>K(+)</name>
        <dbReference type="ChEBI" id="CHEBI:29103"/>
    </cofactor>
    <text evidence="1">Monovalent cation. The ion could be potassium.</text>
</comment>
<comment type="pathway">
    <text evidence="1">Cofactor biosynthesis; coenzyme F420 biosynthesis.</text>
</comment>
<comment type="subunit">
    <text evidence="1">Homodimer.</text>
</comment>
<comment type="similarity">
    <text evidence="1">Belongs to the CofE family.</text>
</comment>
<feature type="chain" id="PRO_0000145787" description="Coenzyme F420:L-glutamate ligase">
    <location>
        <begin position="1"/>
        <end position="253"/>
    </location>
</feature>
<feature type="binding site" evidence="1">
    <location>
        <begin position="9"/>
        <end position="12"/>
    </location>
    <ligand>
        <name>GTP</name>
        <dbReference type="ChEBI" id="CHEBI:37565"/>
    </ligand>
</feature>
<feature type="binding site" evidence="1">
    <location>
        <begin position="38"/>
        <end position="39"/>
    </location>
    <ligand>
        <name>GTP</name>
        <dbReference type="ChEBI" id="CHEBI:37565"/>
    </ligand>
</feature>
<feature type="binding site" evidence="1">
    <location>
        <position position="43"/>
    </location>
    <ligand>
        <name>GTP</name>
        <dbReference type="ChEBI" id="CHEBI:37565"/>
    </ligand>
</feature>
<feature type="binding site" evidence="1">
    <location>
        <position position="113"/>
    </location>
    <ligand>
        <name>a divalent metal cation</name>
        <dbReference type="ChEBI" id="CHEBI:60240"/>
        <label>1</label>
    </ligand>
</feature>
<feature type="binding site" evidence="1">
    <location>
        <position position="116"/>
    </location>
    <ligand>
        <name>GTP</name>
        <dbReference type="ChEBI" id="CHEBI:37565"/>
    </ligand>
</feature>
<feature type="binding site" evidence="1">
    <location>
        <position position="150"/>
    </location>
    <ligand>
        <name>a divalent metal cation</name>
        <dbReference type="ChEBI" id="CHEBI:60240"/>
        <label>1</label>
    </ligand>
</feature>
<feature type="binding site" evidence="1">
    <location>
        <position position="151"/>
    </location>
    <ligand>
        <name>a divalent metal cation</name>
        <dbReference type="ChEBI" id="CHEBI:60240"/>
        <label>2</label>
    </ligand>
</feature>
<feature type="binding site" evidence="1">
    <location>
        <begin position="206"/>
        <end position="213"/>
    </location>
    <ligand>
        <name>GTP</name>
        <dbReference type="ChEBI" id="CHEBI:37565"/>
    </ligand>
</feature>
<feature type="binding site" evidence="1">
    <location>
        <position position="208"/>
    </location>
    <ligand>
        <name>a divalent metal cation</name>
        <dbReference type="ChEBI" id="CHEBI:60240"/>
        <label>2</label>
    </ligand>
</feature>
<name>COFE_HALSA</name>
<evidence type="ECO:0000255" key="1">
    <source>
        <dbReference type="HAMAP-Rule" id="MF_01258"/>
    </source>
</evidence>
<proteinExistence type="inferred from homology"/>
<keyword id="KW-0342">GTP-binding</keyword>
<keyword id="KW-0436">Ligase</keyword>
<keyword id="KW-0460">Magnesium</keyword>
<keyword id="KW-0464">Manganese</keyword>
<keyword id="KW-0479">Metal-binding</keyword>
<keyword id="KW-0547">Nucleotide-binding</keyword>
<keyword id="KW-0630">Potassium</keyword>
<keyword id="KW-1185">Reference proteome</keyword>
<organism>
    <name type="scientific">Halobacterium salinarum (strain ATCC 700922 / JCM 11081 / NRC-1)</name>
    <name type="common">Halobacterium halobium</name>
    <dbReference type="NCBI Taxonomy" id="64091"/>
    <lineage>
        <taxon>Archaea</taxon>
        <taxon>Methanobacteriati</taxon>
        <taxon>Methanobacteriota</taxon>
        <taxon>Stenosarchaea group</taxon>
        <taxon>Halobacteria</taxon>
        <taxon>Halobacteriales</taxon>
        <taxon>Halobacteriaceae</taxon>
        <taxon>Halobacterium</taxon>
        <taxon>Halobacterium salinarum NRC-34001</taxon>
    </lineage>
</organism>
<reference key="1">
    <citation type="journal article" date="2000" name="Proc. Natl. Acad. Sci. U.S.A.">
        <title>Genome sequence of Halobacterium species NRC-1.</title>
        <authorList>
            <person name="Ng W.V."/>
            <person name="Kennedy S.P."/>
            <person name="Mahairas G.G."/>
            <person name="Berquist B."/>
            <person name="Pan M."/>
            <person name="Shukla H.D."/>
            <person name="Lasky S.R."/>
            <person name="Baliga N.S."/>
            <person name="Thorsson V."/>
            <person name="Sbrogna J."/>
            <person name="Swartzell S."/>
            <person name="Weir D."/>
            <person name="Hall J."/>
            <person name="Dahl T.A."/>
            <person name="Welti R."/>
            <person name="Goo Y.A."/>
            <person name="Leithauser B."/>
            <person name="Keller K."/>
            <person name="Cruz R."/>
            <person name="Danson M.J."/>
            <person name="Hough D.W."/>
            <person name="Maddocks D.G."/>
            <person name="Jablonski P.E."/>
            <person name="Krebs M.P."/>
            <person name="Angevine C.M."/>
            <person name="Dale H."/>
            <person name="Isenbarger T.A."/>
            <person name="Peck R.F."/>
            <person name="Pohlschroder M."/>
            <person name="Spudich J.L."/>
            <person name="Jung K.-H."/>
            <person name="Alam M."/>
            <person name="Freitas T."/>
            <person name="Hou S."/>
            <person name="Daniels C.J."/>
            <person name="Dennis P.P."/>
            <person name="Omer A.D."/>
            <person name="Ebhardt H."/>
            <person name="Lowe T.M."/>
            <person name="Liang P."/>
            <person name="Riley M."/>
            <person name="Hood L."/>
            <person name="DasSarma S."/>
        </authorList>
    </citation>
    <scope>NUCLEOTIDE SEQUENCE [LARGE SCALE GENOMIC DNA]</scope>
    <source>
        <strain>ATCC 700922 / JCM 11081 / NRC-1</strain>
    </source>
</reference>
<dbReference type="EC" id="6.3.2.31" evidence="1"/>
<dbReference type="EC" id="6.3.2.34" evidence="1"/>
<dbReference type="EMBL" id="AE004437">
    <property type="protein sequence ID" value="AAG20630.1"/>
    <property type="molecule type" value="Genomic_DNA"/>
</dbReference>
<dbReference type="PIR" id="B84408">
    <property type="entry name" value="B84408"/>
</dbReference>
<dbReference type="RefSeq" id="WP_010903932.1">
    <property type="nucleotide sequence ID" value="NC_002607.1"/>
</dbReference>
<dbReference type="SMR" id="Q9HME1"/>
<dbReference type="FunCoup" id="Q9HME1">
    <property type="interactions" value="67"/>
</dbReference>
<dbReference type="STRING" id="64091.VNG_2586C"/>
<dbReference type="PaxDb" id="64091-VNG_2586C"/>
<dbReference type="KEGG" id="hal:VNG_2586C"/>
<dbReference type="PATRIC" id="fig|64091.14.peg.2003"/>
<dbReference type="HOGENOM" id="CLU_051152_1_1_2"/>
<dbReference type="InParanoid" id="Q9HME1"/>
<dbReference type="OrthoDB" id="11383at2157"/>
<dbReference type="PhylomeDB" id="Q9HME1"/>
<dbReference type="UniPathway" id="UPA00071"/>
<dbReference type="Proteomes" id="UP000000554">
    <property type="component" value="Chromosome"/>
</dbReference>
<dbReference type="GO" id="GO:0052618">
    <property type="term" value="F:coenzyme F420-0:L-glutamate ligase activity"/>
    <property type="evidence" value="ECO:0000318"/>
    <property type="project" value="GO_Central"/>
</dbReference>
<dbReference type="GO" id="GO:0052619">
    <property type="term" value="F:coenzyme F420-1:gamma-L-glutamate ligase activity"/>
    <property type="evidence" value="ECO:0007669"/>
    <property type="project" value="UniProtKB-UniRule"/>
</dbReference>
<dbReference type="GO" id="GO:0005525">
    <property type="term" value="F:GTP binding"/>
    <property type="evidence" value="ECO:0007669"/>
    <property type="project" value="UniProtKB-KW"/>
</dbReference>
<dbReference type="GO" id="GO:0046872">
    <property type="term" value="F:metal ion binding"/>
    <property type="evidence" value="ECO:0007669"/>
    <property type="project" value="UniProtKB-KW"/>
</dbReference>
<dbReference type="GO" id="GO:0052645">
    <property type="term" value="P:F420-0 metabolic process"/>
    <property type="evidence" value="ECO:0007669"/>
    <property type="project" value="UniProtKB-UniRule"/>
</dbReference>
<dbReference type="Gene3D" id="3.30.1330.100">
    <property type="entry name" value="CofE-like"/>
    <property type="match status" value="1"/>
</dbReference>
<dbReference type="Gene3D" id="3.90.1660.10">
    <property type="entry name" value="CofE-like domain"/>
    <property type="match status" value="1"/>
</dbReference>
<dbReference type="HAMAP" id="MF_01258">
    <property type="entry name" value="F420_ligase_CofE"/>
    <property type="match status" value="1"/>
</dbReference>
<dbReference type="InterPro" id="IPR008225">
    <property type="entry name" value="F420-0_g-glutamyl_ligase"/>
</dbReference>
<dbReference type="InterPro" id="IPR002847">
    <property type="entry name" value="F420-0_gamma-glut_ligase-dom"/>
</dbReference>
<dbReference type="InterPro" id="IPR023659">
    <property type="entry name" value="F420_ligase_CofE_arc"/>
</dbReference>
<dbReference type="NCBIfam" id="TIGR01916">
    <property type="entry name" value="F420_cofE"/>
    <property type="match status" value="1"/>
</dbReference>
<dbReference type="NCBIfam" id="NF009809">
    <property type="entry name" value="PRK13293.1"/>
    <property type="match status" value="1"/>
</dbReference>
<dbReference type="PANTHER" id="PTHR47917">
    <property type="match status" value="1"/>
</dbReference>
<dbReference type="PANTHER" id="PTHR47917:SF1">
    <property type="entry name" value="COENZYME F420:L-GLUTAMATE LIGASE"/>
    <property type="match status" value="1"/>
</dbReference>
<dbReference type="Pfam" id="PF01996">
    <property type="entry name" value="F420_ligase"/>
    <property type="match status" value="1"/>
</dbReference>
<dbReference type="SUPFAM" id="SSF144010">
    <property type="entry name" value="CofE-like"/>
    <property type="match status" value="1"/>
</dbReference>
<protein>
    <recommendedName>
        <fullName evidence="1">Coenzyme F420:L-glutamate ligase</fullName>
        <ecNumber evidence="1">6.3.2.31</ecNumber>
        <ecNumber evidence="1">6.3.2.34</ecNumber>
    </recommendedName>
    <alternativeName>
        <fullName evidence="1">Coenzyme F420-0:L-glutamate ligase</fullName>
    </alternativeName>
    <alternativeName>
        <fullName evidence="1">Coenzyme F420-1:gamma-L-glutamate ligase</fullName>
    </alternativeName>
</protein>